<evidence type="ECO:0000255" key="1">
    <source>
        <dbReference type="HAMAP-Rule" id="MF_01956"/>
    </source>
</evidence>
<protein>
    <recommendedName>
        <fullName evidence="1">G/U mismatch-specific DNA glycosylase</fullName>
        <ecNumber evidence="1">3.2.2.28</ecNumber>
    </recommendedName>
    <alternativeName>
        <fullName evidence="1">Double-strand-specific uracil glycosylase</fullName>
    </alternativeName>
    <alternativeName>
        <fullName evidence="1">Mismatch-specific uracil DNA-glycosylase</fullName>
        <shortName evidence="1">MUG</shortName>
    </alternativeName>
</protein>
<reference key="1">
    <citation type="journal article" date="2005" name="Nucleic Acids Res.">
        <title>The genome sequence of Salmonella enterica serovar Choleraesuis, a highly invasive and resistant zoonotic pathogen.</title>
        <authorList>
            <person name="Chiu C.-H."/>
            <person name="Tang P."/>
            <person name="Chu C."/>
            <person name="Hu S."/>
            <person name="Bao Q."/>
            <person name="Yu J."/>
            <person name="Chou Y.-Y."/>
            <person name="Wang H.-S."/>
            <person name="Lee Y.-S."/>
        </authorList>
    </citation>
    <scope>NUCLEOTIDE SEQUENCE [LARGE SCALE GENOMIC DNA]</scope>
    <source>
        <strain>SC-B67</strain>
    </source>
</reference>
<keyword id="KW-0963">Cytoplasm</keyword>
<keyword id="KW-0227">DNA damage</keyword>
<keyword id="KW-0228">DNA excision</keyword>
<keyword id="KW-0234">DNA repair</keyword>
<keyword id="KW-0238">DNA-binding</keyword>
<keyword id="KW-0378">Hydrolase</keyword>
<accession>Q57JP7</accession>
<gene>
    <name evidence="1" type="primary">mug</name>
    <name type="ordered locus">SCH_3159</name>
</gene>
<proteinExistence type="inferred from homology"/>
<comment type="function">
    <text evidence="1">Excises ethenocytosine and uracil, which can arise by alkylation or deamination of cytosine, respectively, from the corresponding mispairs with guanine in ds-DNA. It is capable of hydrolyzing the carbon-nitrogen bond between the sugar-phosphate backbone of the DNA and the mispaired base. The complementary strand guanine functions in substrate recognition. Required for DNA damage lesion repair in stationary-phase cells.</text>
</comment>
<comment type="catalytic activity">
    <reaction evidence="1">
        <text>Specifically hydrolyzes mismatched double-stranded DNA and polynucleotides, releasing free uracil.</text>
        <dbReference type="EC" id="3.2.2.28"/>
    </reaction>
</comment>
<comment type="subunit">
    <text evidence="1">Binds DNA as a monomer.</text>
</comment>
<comment type="subcellular location">
    <subcellularLocation>
        <location evidence="1">Cytoplasm</location>
    </subcellularLocation>
</comment>
<comment type="similarity">
    <text evidence="1">Belongs to the uracil-DNA glycosylase (UDG) superfamily. TDG/mug family.</text>
</comment>
<name>MUG_SALCH</name>
<organism>
    <name type="scientific">Salmonella choleraesuis (strain SC-B67)</name>
    <dbReference type="NCBI Taxonomy" id="321314"/>
    <lineage>
        <taxon>Bacteria</taxon>
        <taxon>Pseudomonadati</taxon>
        <taxon>Pseudomonadota</taxon>
        <taxon>Gammaproteobacteria</taxon>
        <taxon>Enterobacterales</taxon>
        <taxon>Enterobacteriaceae</taxon>
        <taxon>Salmonella</taxon>
    </lineage>
</organism>
<dbReference type="EC" id="3.2.2.28" evidence="1"/>
<dbReference type="EMBL" id="AE017220">
    <property type="protein sequence ID" value="AAX67065.1"/>
    <property type="molecule type" value="Genomic_DNA"/>
</dbReference>
<dbReference type="RefSeq" id="WP_001540938.1">
    <property type="nucleotide sequence ID" value="NC_006905.1"/>
</dbReference>
<dbReference type="SMR" id="Q57JP7"/>
<dbReference type="KEGG" id="sec:SCH_3159"/>
<dbReference type="HOGENOM" id="CLU_042829_3_1_6"/>
<dbReference type="Proteomes" id="UP000000538">
    <property type="component" value="Chromosome"/>
</dbReference>
<dbReference type="GO" id="GO:0005737">
    <property type="term" value="C:cytoplasm"/>
    <property type="evidence" value="ECO:0007669"/>
    <property type="project" value="UniProtKB-SubCell"/>
</dbReference>
<dbReference type="GO" id="GO:0003677">
    <property type="term" value="F:DNA binding"/>
    <property type="evidence" value="ECO:0007669"/>
    <property type="project" value="UniProtKB-KW"/>
</dbReference>
<dbReference type="GO" id="GO:0008263">
    <property type="term" value="F:pyrimidine-specific mismatch base pair DNA N-glycosylase activity"/>
    <property type="evidence" value="ECO:0007669"/>
    <property type="project" value="UniProtKB-UniRule"/>
</dbReference>
<dbReference type="GO" id="GO:0004844">
    <property type="term" value="F:uracil DNA N-glycosylase activity"/>
    <property type="evidence" value="ECO:0007669"/>
    <property type="project" value="TreeGrafter"/>
</dbReference>
<dbReference type="GO" id="GO:0006285">
    <property type="term" value="P:base-excision repair, AP site formation"/>
    <property type="evidence" value="ECO:0007669"/>
    <property type="project" value="UniProtKB-UniRule"/>
</dbReference>
<dbReference type="CDD" id="cd10028">
    <property type="entry name" value="UDG-F2_TDG_MUG"/>
    <property type="match status" value="1"/>
</dbReference>
<dbReference type="Gene3D" id="3.40.470.10">
    <property type="entry name" value="Uracil-DNA glycosylase-like domain"/>
    <property type="match status" value="1"/>
</dbReference>
<dbReference type="HAMAP" id="MF_01956">
    <property type="entry name" value="MUG"/>
    <property type="match status" value="1"/>
</dbReference>
<dbReference type="InterPro" id="IPR015637">
    <property type="entry name" value="MUG/TDG"/>
</dbReference>
<dbReference type="InterPro" id="IPR023502">
    <property type="entry name" value="MUG_bact"/>
</dbReference>
<dbReference type="InterPro" id="IPR005122">
    <property type="entry name" value="Uracil-DNA_glycosylase-like"/>
</dbReference>
<dbReference type="InterPro" id="IPR036895">
    <property type="entry name" value="Uracil-DNA_glycosylase-like_sf"/>
</dbReference>
<dbReference type="NCBIfam" id="NF007570">
    <property type="entry name" value="PRK10201.1"/>
    <property type="match status" value="1"/>
</dbReference>
<dbReference type="PANTHER" id="PTHR12159">
    <property type="entry name" value="G/T AND G/U MISMATCH-SPECIFIC DNA GLYCOSYLASE"/>
    <property type="match status" value="1"/>
</dbReference>
<dbReference type="PANTHER" id="PTHR12159:SF9">
    <property type="entry name" value="G_T MISMATCH-SPECIFIC THYMINE DNA GLYCOSYLASE"/>
    <property type="match status" value="1"/>
</dbReference>
<dbReference type="Pfam" id="PF03167">
    <property type="entry name" value="UDG"/>
    <property type="match status" value="1"/>
</dbReference>
<dbReference type="SUPFAM" id="SSF52141">
    <property type="entry name" value="Uracil-DNA glycosylase-like"/>
    <property type="match status" value="1"/>
</dbReference>
<feature type="chain" id="PRO_0000238681" description="G/U mismatch-specific DNA glycosylase">
    <location>
        <begin position="1"/>
        <end position="168"/>
    </location>
</feature>
<sequence length="168" mass="18578">MVKDILAPGLRVVFCGINPGLSSANTGFPFAHPANRFWKVIHLAGFTDRQLKPEEAEKLLDFRCGVTKLVDRPTVQATEVKLHGLRSGGRNLIEKIEDYQPAALAVLGKQAFEQGFSQRGIAWGKQKIAIGATMVWVLPNPSGLNRIKTEKLVEAYRELDQALIMRGL</sequence>